<organism>
    <name type="scientific">Staphylococcus aureus (strain MSSA476)</name>
    <dbReference type="NCBI Taxonomy" id="282459"/>
    <lineage>
        <taxon>Bacteria</taxon>
        <taxon>Bacillati</taxon>
        <taxon>Bacillota</taxon>
        <taxon>Bacilli</taxon>
        <taxon>Bacillales</taxon>
        <taxon>Staphylococcaceae</taxon>
        <taxon>Staphylococcus</taxon>
    </lineage>
</organism>
<sequence>MFNEKDQLAVDTLRALSIDTIEKANSGHPGLPMGAAPMAYTLWTRHLNFNPQSKDYFNRDRFVLSAGHGSALLYSLLHVSGSLELEELKQFRQWGSKTPGHPEYRHTDGVEVTTGPLGQGFAMSVGLALAEDHLAGKFNKEGYNVVDHYTYVLASDGDLMEGISHEAASFAGHNKLSKLVVLYDSNDISLDGELNKAFSENTKARFEAYGWNYLLVKDGNDLEEIDKAITTAKSQEGPTIIEVKTTIGFGSPNKAGTNGVHGAPLGEVERKLTFENYGLDPEKRFNVSEEVYEIFQNTMLKRANEDESQWNSLLEKYAETYPELAEEFKLAISGKLPKNYKDELPRFELGHNGASRADSGTVIQAISKTVPSFFGGSADLAGSNKSNVNDATDYSSETPEGKNVWFGVREFAMGAAVNGMAAHGGLHPYGATFFVFSDYLKPALRLSSIMGLNATFIFTHDSIAVGEDGPTHEPIEQLAGLRAIPNMNVIRPADGNETRVAWEVALESESTPTSLVLTRQNLPVLDVPEDVVEEGVRKGAYTVYGSEETPEFLLLASGSEVSLAVEAAKDLEKQGKSVRVVSMPNWNAFEQQSEEYKESVIPSSVTKRVAIEMASPLGWHKYVGTAGKVIAIDGFGASAPGDLVVEKYGFTKENILNQVMSL</sequence>
<gene>
    <name type="primary">tkt</name>
    <name type="ordered locus">SAS1282</name>
</gene>
<protein>
    <recommendedName>
        <fullName>Transketolase</fullName>
        <shortName>TK</shortName>
        <ecNumber>2.2.1.1</ecNumber>
    </recommendedName>
</protein>
<feature type="chain" id="PRO_0000191874" description="Transketolase">
    <location>
        <begin position="1"/>
        <end position="662"/>
    </location>
</feature>
<feature type="active site" description="Proton donor" evidence="1">
    <location>
        <position position="410"/>
    </location>
</feature>
<feature type="binding site" evidence="1">
    <location>
        <position position="28"/>
    </location>
    <ligand>
        <name>substrate</name>
    </ligand>
</feature>
<feature type="binding site" evidence="1">
    <location>
        <position position="68"/>
    </location>
    <ligand>
        <name>thiamine diphosphate</name>
        <dbReference type="ChEBI" id="CHEBI:58937"/>
    </ligand>
</feature>
<feature type="binding site" evidence="1">
    <location>
        <begin position="115"/>
        <end position="117"/>
    </location>
    <ligand>
        <name>thiamine diphosphate</name>
        <dbReference type="ChEBI" id="CHEBI:58937"/>
    </ligand>
</feature>
<feature type="binding site" evidence="1">
    <location>
        <position position="156"/>
    </location>
    <ligand>
        <name>Mg(2+)</name>
        <dbReference type="ChEBI" id="CHEBI:18420"/>
    </ligand>
</feature>
<feature type="binding site" evidence="1">
    <location>
        <position position="157"/>
    </location>
    <ligand>
        <name>thiamine diphosphate</name>
        <dbReference type="ChEBI" id="CHEBI:58937"/>
    </ligand>
</feature>
<feature type="binding site" evidence="1">
    <location>
        <position position="186"/>
    </location>
    <ligand>
        <name>Mg(2+)</name>
        <dbReference type="ChEBI" id="CHEBI:18420"/>
    </ligand>
</feature>
<feature type="binding site" evidence="1">
    <location>
        <position position="186"/>
    </location>
    <ligand>
        <name>thiamine diphosphate</name>
        <dbReference type="ChEBI" id="CHEBI:58937"/>
    </ligand>
</feature>
<feature type="binding site" evidence="1">
    <location>
        <position position="188"/>
    </location>
    <ligand>
        <name>Mg(2+)</name>
        <dbReference type="ChEBI" id="CHEBI:18420"/>
    </ligand>
</feature>
<feature type="binding site" evidence="1">
    <location>
        <position position="261"/>
    </location>
    <ligand>
        <name>substrate</name>
    </ligand>
</feature>
<feature type="binding site" evidence="1">
    <location>
        <position position="261"/>
    </location>
    <ligand>
        <name>thiamine diphosphate</name>
        <dbReference type="ChEBI" id="CHEBI:58937"/>
    </ligand>
</feature>
<feature type="binding site" evidence="1">
    <location>
        <position position="356"/>
    </location>
    <ligand>
        <name>substrate</name>
    </ligand>
</feature>
<feature type="binding site" evidence="1">
    <location>
        <position position="383"/>
    </location>
    <ligand>
        <name>substrate</name>
    </ligand>
</feature>
<feature type="binding site" evidence="1">
    <location>
        <position position="436"/>
    </location>
    <ligand>
        <name>thiamine diphosphate</name>
        <dbReference type="ChEBI" id="CHEBI:58937"/>
    </ligand>
</feature>
<feature type="binding site" evidence="1">
    <location>
        <position position="460"/>
    </location>
    <ligand>
        <name>substrate</name>
    </ligand>
</feature>
<feature type="binding site" evidence="1">
    <location>
        <position position="468"/>
    </location>
    <ligand>
        <name>substrate</name>
    </ligand>
</feature>
<feature type="binding site" evidence="1">
    <location>
        <position position="519"/>
    </location>
    <ligand>
        <name>substrate</name>
    </ligand>
</feature>
<feature type="site" description="Important for catalytic activity" evidence="1">
    <location>
        <position position="28"/>
    </location>
</feature>
<feature type="site" description="Important for catalytic activity" evidence="1">
    <location>
        <position position="261"/>
    </location>
</feature>
<keyword id="KW-0106">Calcium</keyword>
<keyword id="KW-0233">DNA recombination</keyword>
<keyword id="KW-0460">Magnesium</keyword>
<keyword id="KW-0479">Metal-binding</keyword>
<keyword id="KW-0786">Thiamine pyrophosphate</keyword>
<keyword id="KW-0808">Transferase</keyword>
<reference key="1">
    <citation type="journal article" date="2004" name="Proc. Natl. Acad. Sci. U.S.A.">
        <title>Complete genomes of two clinical Staphylococcus aureus strains: evidence for the rapid evolution of virulence and drug resistance.</title>
        <authorList>
            <person name="Holden M.T.G."/>
            <person name="Feil E.J."/>
            <person name="Lindsay J.A."/>
            <person name="Peacock S.J."/>
            <person name="Day N.P.J."/>
            <person name="Enright M.C."/>
            <person name="Foster T.J."/>
            <person name="Moore C.E."/>
            <person name="Hurst L."/>
            <person name="Atkin R."/>
            <person name="Barron A."/>
            <person name="Bason N."/>
            <person name="Bentley S.D."/>
            <person name="Chillingworth C."/>
            <person name="Chillingworth T."/>
            <person name="Churcher C."/>
            <person name="Clark L."/>
            <person name="Corton C."/>
            <person name="Cronin A."/>
            <person name="Doggett J."/>
            <person name="Dowd L."/>
            <person name="Feltwell T."/>
            <person name="Hance Z."/>
            <person name="Harris B."/>
            <person name="Hauser H."/>
            <person name="Holroyd S."/>
            <person name="Jagels K."/>
            <person name="James K.D."/>
            <person name="Lennard N."/>
            <person name="Line A."/>
            <person name="Mayes R."/>
            <person name="Moule S."/>
            <person name="Mungall K."/>
            <person name="Ormond D."/>
            <person name="Quail M.A."/>
            <person name="Rabbinowitsch E."/>
            <person name="Rutherford K.M."/>
            <person name="Sanders M."/>
            <person name="Sharp S."/>
            <person name="Simmonds M."/>
            <person name="Stevens K."/>
            <person name="Whitehead S."/>
            <person name="Barrell B.G."/>
            <person name="Spratt B.G."/>
            <person name="Parkhill J."/>
        </authorList>
    </citation>
    <scope>NUCLEOTIDE SEQUENCE [LARGE SCALE GENOMIC DNA]</scope>
    <source>
        <strain>MSSA476</strain>
    </source>
</reference>
<proteinExistence type="inferred from homology"/>
<dbReference type="EC" id="2.2.1.1"/>
<dbReference type="EMBL" id="BX571857">
    <property type="protein sequence ID" value="CAG43060.1"/>
    <property type="molecule type" value="Genomic_DNA"/>
</dbReference>
<dbReference type="RefSeq" id="WP_000481443.1">
    <property type="nucleotide sequence ID" value="NC_002953.3"/>
</dbReference>
<dbReference type="SMR" id="Q6G9L6"/>
<dbReference type="KEGG" id="sas:SAS1282"/>
<dbReference type="HOGENOM" id="CLU_009227_0_0_9"/>
<dbReference type="UniPathway" id="UPA00115"/>
<dbReference type="UniPathway" id="UPA00116"/>
<dbReference type="GO" id="GO:0005829">
    <property type="term" value="C:cytosol"/>
    <property type="evidence" value="ECO:0007669"/>
    <property type="project" value="TreeGrafter"/>
</dbReference>
<dbReference type="GO" id="GO:0046872">
    <property type="term" value="F:metal ion binding"/>
    <property type="evidence" value="ECO:0007669"/>
    <property type="project" value="UniProtKB-KW"/>
</dbReference>
<dbReference type="GO" id="GO:0004802">
    <property type="term" value="F:transketolase activity"/>
    <property type="evidence" value="ECO:0007669"/>
    <property type="project" value="UniProtKB-EC"/>
</dbReference>
<dbReference type="GO" id="GO:0006310">
    <property type="term" value="P:DNA recombination"/>
    <property type="evidence" value="ECO:0007669"/>
    <property type="project" value="UniProtKB-KW"/>
</dbReference>
<dbReference type="GO" id="GO:0006098">
    <property type="term" value="P:pentose-phosphate shunt"/>
    <property type="evidence" value="ECO:0007669"/>
    <property type="project" value="UniProtKB-UniPathway"/>
</dbReference>
<dbReference type="GO" id="GO:0019253">
    <property type="term" value="P:reductive pentose-phosphate cycle"/>
    <property type="evidence" value="ECO:0007669"/>
    <property type="project" value="UniProtKB-UniPathway"/>
</dbReference>
<dbReference type="CDD" id="cd07033">
    <property type="entry name" value="TPP_PYR_DXS_TK_like"/>
    <property type="match status" value="1"/>
</dbReference>
<dbReference type="CDD" id="cd02012">
    <property type="entry name" value="TPP_TK"/>
    <property type="match status" value="1"/>
</dbReference>
<dbReference type="FunFam" id="3.40.50.920:FF:000003">
    <property type="entry name" value="Transketolase"/>
    <property type="match status" value="1"/>
</dbReference>
<dbReference type="FunFam" id="3.40.50.970:FF:000003">
    <property type="entry name" value="Transketolase"/>
    <property type="match status" value="1"/>
</dbReference>
<dbReference type="FunFam" id="3.40.50.970:FF:000081">
    <property type="entry name" value="Transketolase"/>
    <property type="match status" value="1"/>
</dbReference>
<dbReference type="Gene3D" id="3.40.50.920">
    <property type="match status" value="1"/>
</dbReference>
<dbReference type="Gene3D" id="3.40.50.970">
    <property type="match status" value="2"/>
</dbReference>
<dbReference type="InterPro" id="IPR029061">
    <property type="entry name" value="THDP-binding"/>
</dbReference>
<dbReference type="InterPro" id="IPR009014">
    <property type="entry name" value="Transketo_C/PFOR_II"/>
</dbReference>
<dbReference type="InterPro" id="IPR055152">
    <property type="entry name" value="Transketolase-like_C_2"/>
</dbReference>
<dbReference type="InterPro" id="IPR005475">
    <property type="entry name" value="Transketolase-like_Pyr-bd"/>
</dbReference>
<dbReference type="InterPro" id="IPR005478">
    <property type="entry name" value="Transketolase_bac-like"/>
</dbReference>
<dbReference type="InterPro" id="IPR020826">
    <property type="entry name" value="Transketolase_BS"/>
</dbReference>
<dbReference type="InterPro" id="IPR049557">
    <property type="entry name" value="Transketolase_CS"/>
</dbReference>
<dbReference type="InterPro" id="IPR033247">
    <property type="entry name" value="Transketolase_fam"/>
</dbReference>
<dbReference type="InterPro" id="IPR005474">
    <property type="entry name" value="Transketolase_N"/>
</dbReference>
<dbReference type="NCBIfam" id="TIGR00232">
    <property type="entry name" value="tktlase_bact"/>
    <property type="match status" value="1"/>
</dbReference>
<dbReference type="PANTHER" id="PTHR43522">
    <property type="entry name" value="TRANSKETOLASE"/>
    <property type="match status" value="1"/>
</dbReference>
<dbReference type="PANTHER" id="PTHR43522:SF2">
    <property type="entry name" value="TRANSKETOLASE 1-RELATED"/>
    <property type="match status" value="1"/>
</dbReference>
<dbReference type="Pfam" id="PF02779">
    <property type="entry name" value="Transket_pyr"/>
    <property type="match status" value="1"/>
</dbReference>
<dbReference type="Pfam" id="PF22613">
    <property type="entry name" value="Transketolase_C_1"/>
    <property type="match status" value="1"/>
</dbReference>
<dbReference type="Pfam" id="PF00456">
    <property type="entry name" value="Transketolase_N"/>
    <property type="match status" value="1"/>
</dbReference>
<dbReference type="SMART" id="SM00861">
    <property type="entry name" value="Transket_pyr"/>
    <property type="match status" value="1"/>
</dbReference>
<dbReference type="SUPFAM" id="SSF52518">
    <property type="entry name" value="Thiamin diphosphate-binding fold (THDP-binding)"/>
    <property type="match status" value="2"/>
</dbReference>
<dbReference type="SUPFAM" id="SSF52922">
    <property type="entry name" value="TK C-terminal domain-like"/>
    <property type="match status" value="1"/>
</dbReference>
<dbReference type="PROSITE" id="PS00801">
    <property type="entry name" value="TRANSKETOLASE_1"/>
    <property type="match status" value="1"/>
</dbReference>
<dbReference type="PROSITE" id="PS00802">
    <property type="entry name" value="TRANSKETOLASE_2"/>
    <property type="match status" value="1"/>
</dbReference>
<comment type="function">
    <text evidence="1">Catalyzes the transfer of a two-carbon ketol group from a ketose donor to an aldose acceptor, via a covalent intermediate with the cofactor thiamine pyrophosphate.</text>
</comment>
<comment type="catalytic activity">
    <reaction>
        <text>D-sedoheptulose 7-phosphate + D-glyceraldehyde 3-phosphate = aldehydo-D-ribose 5-phosphate + D-xylulose 5-phosphate</text>
        <dbReference type="Rhea" id="RHEA:10508"/>
        <dbReference type="ChEBI" id="CHEBI:57483"/>
        <dbReference type="ChEBI" id="CHEBI:57737"/>
        <dbReference type="ChEBI" id="CHEBI:58273"/>
        <dbReference type="ChEBI" id="CHEBI:59776"/>
        <dbReference type="EC" id="2.2.1.1"/>
    </reaction>
</comment>
<comment type="cofactor">
    <cofactor evidence="1">
        <name>Mg(2+)</name>
        <dbReference type="ChEBI" id="CHEBI:18420"/>
    </cofactor>
    <cofactor evidence="1">
        <name>Ca(2+)</name>
        <dbReference type="ChEBI" id="CHEBI:29108"/>
    </cofactor>
    <cofactor evidence="1">
        <name>Mn(2+)</name>
        <dbReference type="ChEBI" id="CHEBI:29035"/>
    </cofactor>
    <cofactor evidence="1">
        <name>Co(2+)</name>
        <dbReference type="ChEBI" id="CHEBI:48828"/>
    </cofactor>
    <text evidence="1">Binds 1 Mg(2+) ion per subunit. Can also utilize other divalent metal cations, such as Ca(2+), Mn(2+) and Co(2+).</text>
</comment>
<comment type="cofactor">
    <cofactor evidence="1">
        <name>thiamine diphosphate</name>
        <dbReference type="ChEBI" id="CHEBI:58937"/>
    </cofactor>
    <text evidence="1">Binds 1 thiamine pyrophosphate per subunit.</text>
</comment>
<comment type="pathway">
    <text>Carbohydrate biosynthesis; Calvin cycle.</text>
</comment>
<comment type="pathway">
    <text>Carbohydrate degradation; pentose phosphate pathway.</text>
</comment>
<comment type="subunit">
    <text evidence="1">Homodimer.</text>
</comment>
<comment type="similarity">
    <text evidence="2">Belongs to the transketolase family.</text>
</comment>
<accession>Q6G9L6</accession>
<name>TKT_STAAS</name>
<evidence type="ECO:0000250" key="1"/>
<evidence type="ECO:0000305" key="2"/>